<reference key="1">
    <citation type="journal article" date="2008" name="PLoS ONE">
        <title>Genome biology of Actinobacillus pleuropneumoniae JL03, an isolate of serotype 3 prevalent in China.</title>
        <authorList>
            <person name="Xu Z."/>
            <person name="Zhou Y."/>
            <person name="Li L."/>
            <person name="Zhou R."/>
            <person name="Xiao S."/>
            <person name="Wan Y."/>
            <person name="Zhang S."/>
            <person name="Wang K."/>
            <person name="Li W."/>
            <person name="Li L."/>
            <person name="Jin H."/>
            <person name="Kang M."/>
            <person name="Dalai B."/>
            <person name="Li T."/>
            <person name="Liu L."/>
            <person name="Cheng Y."/>
            <person name="Zhang L."/>
            <person name="Xu T."/>
            <person name="Zheng H."/>
            <person name="Pu S."/>
            <person name="Wang B."/>
            <person name="Gu W."/>
            <person name="Zhang X.L."/>
            <person name="Zhu G.-F."/>
            <person name="Wang S."/>
            <person name="Zhao G.-P."/>
            <person name="Chen H."/>
        </authorList>
    </citation>
    <scope>NUCLEOTIDE SEQUENCE [LARGE SCALE GENOMIC DNA]</scope>
    <source>
        <strain>JL03</strain>
    </source>
</reference>
<feature type="chain" id="PRO_1000191551" description="Nucleoid-associated protein APJL_0454">
    <location>
        <begin position="1"/>
        <end position="333"/>
    </location>
</feature>
<proteinExistence type="inferred from homology"/>
<organism>
    <name type="scientific">Actinobacillus pleuropneumoniae serotype 3 (strain JL03)</name>
    <dbReference type="NCBI Taxonomy" id="434271"/>
    <lineage>
        <taxon>Bacteria</taxon>
        <taxon>Pseudomonadati</taxon>
        <taxon>Pseudomonadota</taxon>
        <taxon>Gammaproteobacteria</taxon>
        <taxon>Pasteurellales</taxon>
        <taxon>Pasteurellaceae</taxon>
        <taxon>Actinobacillus</taxon>
    </lineage>
</organism>
<dbReference type="EMBL" id="CP000687">
    <property type="protein sequence ID" value="ABY69037.1"/>
    <property type="molecule type" value="Genomic_DNA"/>
</dbReference>
<dbReference type="SMR" id="B0BTT2"/>
<dbReference type="KEGG" id="apj:APJL_0454"/>
<dbReference type="HOGENOM" id="CLU_063050_0_1_6"/>
<dbReference type="Proteomes" id="UP000008547">
    <property type="component" value="Chromosome"/>
</dbReference>
<dbReference type="GO" id="GO:0043590">
    <property type="term" value="C:bacterial nucleoid"/>
    <property type="evidence" value="ECO:0007669"/>
    <property type="project" value="TreeGrafter"/>
</dbReference>
<dbReference type="GO" id="GO:0005737">
    <property type="term" value="C:cytoplasm"/>
    <property type="evidence" value="ECO:0007669"/>
    <property type="project" value="UniProtKB-UniRule"/>
</dbReference>
<dbReference type="GO" id="GO:0003690">
    <property type="term" value="F:double-stranded DNA binding"/>
    <property type="evidence" value="ECO:0007669"/>
    <property type="project" value="TreeGrafter"/>
</dbReference>
<dbReference type="GO" id="GO:0003727">
    <property type="term" value="F:single-stranded RNA binding"/>
    <property type="evidence" value="ECO:0007669"/>
    <property type="project" value="TreeGrafter"/>
</dbReference>
<dbReference type="HAMAP" id="MF_00730">
    <property type="entry name" value="NdpA"/>
    <property type="match status" value="1"/>
</dbReference>
<dbReference type="InterPro" id="IPR007358">
    <property type="entry name" value="Nucleoid_associated_NdpA"/>
</dbReference>
<dbReference type="NCBIfam" id="NF001557">
    <property type="entry name" value="PRK00378.1"/>
    <property type="match status" value="1"/>
</dbReference>
<dbReference type="PANTHER" id="PTHR38772">
    <property type="match status" value="1"/>
</dbReference>
<dbReference type="PANTHER" id="PTHR38772:SF1">
    <property type="entry name" value="NUCLEOID-ASSOCIATED PROTEIN YEJK"/>
    <property type="match status" value="1"/>
</dbReference>
<dbReference type="Pfam" id="PF04245">
    <property type="entry name" value="NA37"/>
    <property type="match status" value="1"/>
</dbReference>
<accession>B0BTT2</accession>
<sequence length="333" mass="37807">MSINVTEIVLHQIHQTEGETPELNTVLRDNLLAISPEVEQMMLQLHQAYQSKAKAYGIFKNESIFAQQLNRLLEQETDFLPFSHSCAKMLSSELAKYPFASGGTFILCRYNFLATDYLFIALIDSRTSMLVDDQLEIKRTEYLDITQYDIACRINLTELKINAQSNRYLTFIKGRVGRKIADFFMDFLSAEEGLNPQLQNQTLLQAVSDYCDQGELSAPQTREVKKQVFEYCKGQINSGEEIALSELSEALPTLNEVDFAQFTQEQEYGLEENIPPVRNALKTLTKYSGSGKGVTISFNADLLGERLIWDELNDTLTIKGLPANLRDQLARNK</sequence>
<comment type="subcellular location">
    <subcellularLocation>
        <location evidence="1">Cytoplasm</location>
        <location evidence="1">Nucleoid</location>
    </subcellularLocation>
</comment>
<comment type="similarity">
    <text evidence="1">Belongs to the YejK family.</text>
</comment>
<keyword id="KW-0963">Cytoplasm</keyword>
<protein>
    <recommendedName>
        <fullName evidence="1">Nucleoid-associated protein APJL_0454</fullName>
    </recommendedName>
</protein>
<gene>
    <name type="ordered locus">APJL_0454</name>
</gene>
<evidence type="ECO:0000255" key="1">
    <source>
        <dbReference type="HAMAP-Rule" id="MF_00730"/>
    </source>
</evidence>
<name>NDPA_ACTPJ</name>